<sequence>MEASRFIEIGLLTRPHGLKGEVCVDYYADSPFLLEGTVYLKAGRAAPRPVKVQSMRMHKGRPLVIFEGVNDRTAAELLRGHVMLVPEDTLPELDEDEVYLFELEGISVVIDESGEHLGVIERIDTDAYQEIWVIRTPQGKEVLFPAAAPFVLDIDLDSRTARIAPPPGLLDIYLSD</sequence>
<comment type="function">
    <text evidence="1">An accessory protein needed during the final step in the assembly of 30S ribosomal subunit, possibly for assembly of the head region. Essential for efficient processing of 16S rRNA. May be needed both before and after RbfA during the maturation of 16S rRNA. It has affinity for free ribosomal 30S subunits but not for 70S ribosomes.</text>
</comment>
<comment type="subunit">
    <text evidence="1">Binds ribosomal protein uS19.</text>
</comment>
<comment type="subcellular location">
    <subcellularLocation>
        <location evidence="1">Cytoplasm</location>
    </subcellularLocation>
</comment>
<comment type="domain">
    <text evidence="1">The PRC barrel domain binds ribosomal protein uS19.</text>
</comment>
<comment type="similarity">
    <text evidence="1">Belongs to the RimM family.</text>
</comment>
<feature type="chain" id="PRO_1000001168" description="Ribosome maturation factor RimM">
    <location>
        <begin position="1"/>
        <end position="176"/>
    </location>
</feature>
<feature type="domain" description="PRC barrel" evidence="1">
    <location>
        <begin position="95"/>
        <end position="169"/>
    </location>
</feature>
<keyword id="KW-0143">Chaperone</keyword>
<keyword id="KW-0963">Cytoplasm</keyword>
<keyword id="KW-0690">Ribosome biogenesis</keyword>
<keyword id="KW-0698">rRNA processing</keyword>
<name>RIMM_NITV4</name>
<proteinExistence type="inferred from homology"/>
<accession>A1VFE4</accession>
<dbReference type="EMBL" id="CP000527">
    <property type="protein sequence ID" value="ABM29160.1"/>
    <property type="molecule type" value="Genomic_DNA"/>
</dbReference>
<dbReference type="RefSeq" id="WP_010938138.1">
    <property type="nucleotide sequence ID" value="NC_008751.1"/>
</dbReference>
<dbReference type="SMR" id="A1VFE4"/>
<dbReference type="KEGG" id="dvl:Dvul_2144"/>
<dbReference type="HOGENOM" id="CLU_077636_0_0_7"/>
<dbReference type="Proteomes" id="UP000009173">
    <property type="component" value="Chromosome"/>
</dbReference>
<dbReference type="GO" id="GO:0005737">
    <property type="term" value="C:cytoplasm"/>
    <property type="evidence" value="ECO:0007669"/>
    <property type="project" value="UniProtKB-SubCell"/>
</dbReference>
<dbReference type="GO" id="GO:0005840">
    <property type="term" value="C:ribosome"/>
    <property type="evidence" value="ECO:0007669"/>
    <property type="project" value="InterPro"/>
</dbReference>
<dbReference type="GO" id="GO:0043022">
    <property type="term" value="F:ribosome binding"/>
    <property type="evidence" value="ECO:0007669"/>
    <property type="project" value="InterPro"/>
</dbReference>
<dbReference type="GO" id="GO:0042274">
    <property type="term" value="P:ribosomal small subunit biogenesis"/>
    <property type="evidence" value="ECO:0007669"/>
    <property type="project" value="UniProtKB-UniRule"/>
</dbReference>
<dbReference type="GO" id="GO:0006364">
    <property type="term" value="P:rRNA processing"/>
    <property type="evidence" value="ECO:0007669"/>
    <property type="project" value="UniProtKB-UniRule"/>
</dbReference>
<dbReference type="Gene3D" id="2.30.30.240">
    <property type="entry name" value="PRC-barrel domain"/>
    <property type="match status" value="1"/>
</dbReference>
<dbReference type="Gene3D" id="2.40.30.60">
    <property type="entry name" value="RimM"/>
    <property type="match status" value="1"/>
</dbReference>
<dbReference type="HAMAP" id="MF_00014">
    <property type="entry name" value="Ribosome_mat_RimM"/>
    <property type="match status" value="1"/>
</dbReference>
<dbReference type="InterPro" id="IPR011033">
    <property type="entry name" value="PRC_barrel-like_sf"/>
</dbReference>
<dbReference type="InterPro" id="IPR056792">
    <property type="entry name" value="PRC_RimM"/>
</dbReference>
<dbReference type="InterPro" id="IPR011961">
    <property type="entry name" value="RimM"/>
</dbReference>
<dbReference type="InterPro" id="IPR002676">
    <property type="entry name" value="RimM_N"/>
</dbReference>
<dbReference type="InterPro" id="IPR036976">
    <property type="entry name" value="RimM_N_sf"/>
</dbReference>
<dbReference type="InterPro" id="IPR009000">
    <property type="entry name" value="Transl_B-barrel_sf"/>
</dbReference>
<dbReference type="NCBIfam" id="TIGR02273">
    <property type="entry name" value="16S_RimM"/>
    <property type="match status" value="1"/>
</dbReference>
<dbReference type="PANTHER" id="PTHR33692">
    <property type="entry name" value="RIBOSOME MATURATION FACTOR RIMM"/>
    <property type="match status" value="1"/>
</dbReference>
<dbReference type="PANTHER" id="PTHR33692:SF1">
    <property type="entry name" value="RIBOSOME MATURATION FACTOR RIMM"/>
    <property type="match status" value="1"/>
</dbReference>
<dbReference type="Pfam" id="PF24986">
    <property type="entry name" value="PRC_RimM"/>
    <property type="match status" value="1"/>
</dbReference>
<dbReference type="Pfam" id="PF01782">
    <property type="entry name" value="RimM"/>
    <property type="match status" value="1"/>
</dbReference>
<dbReference type="SUPFAM" id="SSF50346">
    <property type="entry name" value="PRC-barrel domain"/>
    <property type="match status" value="1"/>
</dbReference>
<dbReference type="SUPFAM" id="SSF50447">
    <property type="entry name" value="Translation proteins"/>
    <property type="match status" value="1"/>
</dbReference>
<reference key="1">
    <citation type="journal article" date="2009" name="Environ. Microbiol.">
        <title>Contribution of mobile genetic elements to Desulfovibrio vulgaris genome plasticity.</title>
        <authorList>
            <person name="Walker C.B."/>
            <person name="Stolyar S."/>
            <person name="Chivian D."/>
            <person name="Pinel N."/>
            <person name="Gabster J.A."/>
            <person name="Dehal P.S."/>
            <person name="He Z."/>
            <person name="Yang Z.K."/>
            <person name="Yen H.C."/>
            <person name="Zhou J."/>
            <person name="Wall J.D."/>
            <person name="Hazen T.C."/>
            <person name="Arkin A.P."/>
            <person name="Stahl D.A."/>
        </authorList>
    </citation>
    <scope>NUCLEOTIDE SEQUENCE [LARGE SCALE GENOMIC DNA]</scope>
    <source>
        <strain>DP4</strain>
    </source>
</reference>
<organism>
    <name type="scientific">Nitratidesulfovibrio vulgaris (strain DP4)</name>
    <name type="common">Desulfovibrio vulgaris</name>
    <dbReference type="NCBI Taxonomy" id="391774"/>
    <lineage>
        <taxon>Bacteria</taxon>
        <taxon>Pseudomonadati</taxon>
        <taxon>Thermodesulfobacteriota</taxon>
        <taxon>Desulfovibrionia</taxon>
        <taxon>Desulfovibrionales</taxon>
        <taxon>Desulfovibrionaceae</taxon>
        <taxon>Nitratidesulfovibrio</taxon>
    </lineage>
</organism>
<protein>
    <recommendedName>
        <fullName evidence="1">Ribosome maturation factor RimM</fullName>
    </recommendedName>
</protein>
<gene>
    <name evidence="1" type="primary">rimM</name>
    <name type="ordered locus">Dvul_2144</name>
</gene>
<evidence type="ECO:0000255" key="1">
    <source>
        <dbReference type="HAMAP-Rule" id="MF_00014"/>
    </source>
</evidence>